<feature type="signal peptide" evidence="2">
    <location>
        <begin position="1"/>
        <end status="unknown"/>
    </location>
</feature>
<feature type="chain" id="PRO_0000349227" description="Putative serine protease 29">
    <location>
        <begin status="unknown"/>
        <end position="313"/>
    </location>
</feature>
<feature type="domain" description="Peptidase S1" evidence="3">
    <location>
        <begin position="68"/>
        <end position="310"/>
    </location>
</feature>
<feature type="region of interest" description="Disordered" evidence="4">
    <location>
        <begin position="1"/>
        <end position="27"/>
    </location>
</feature>
<feature type="compositionally biased region" description="Pro residues" evidence="4">
    <location>
        <begin position="1"/>
        <end position="22"/>
    </location>
</feature>
<feature type="active site" description="Charge relay system" evidence="1">
    <location>
        <position position="114"/>
    </location>
</feature>
<feature type="active site" description="Charge relay system" evidence="1">
    <location>
        <position position="161"/>
    </location>
</feature>
<feature type="active site" description="Charge relay system" evidence="1">
    <location>
        <position position="262"/>
    </location>
</feature>
<feature type="glycosylation site" description="N-linked (GlcNAc...) asparagine" evidence="2">
    <location>
        <position position="143"/>
    </location>
</feature>
<feature type="disulfide bond" evidence="3">
    <location>
        <begin position="99"/>
        <end position="115"/>
    </location>
</feature>
<feature type="disulfide bond" evidence="3">
    <location>
        <begin position="193"/>
        <end position="268"/>
    </location>
</feature>
<feature type="disulfide bond" evidence="3">
    <location>
        <begin position="226"/>
        <end position="249"/>
    </location>
</feature>
<feature type="disulfide bond" evidence="3">
    <location>
        <begin position="258"/>
        <end position="286"/>
    </location>
</feature>
<accession>A6NIE9</accession>
<comment type="subcellular location">
    <subcellularLocation>
        <location evidence="1">Secreted</location>
    </subcellularLocation>
</comment>
<comment type="similarity">
    <text evidence="3">Belongs to the peptidase S1 family.</text>
</comment>
<comment type="caution">
    <text evidence="5">Could be the product of a pseudogene.</text>
</comment>
<name>PRS29_HUMAN</name>
<reference key="1">
    <citation type="journal article" date="2004" name="Nature">
        <title>The sequence and analysis of duplication-rich human chromosome 16.</title>
        <authorList>
            <person name="Martin J."/>
            <person name="Han C."/>
            <person name="Gordon L.A."/>
            <person name="Terry A."/>
            <person name="Prabhakar S."/>
            <person name="She X."/>
            <person name="Xie G."/>
            <person name="Hellsten U."/>
            <person name="Chan Y.M."/>
            <person name="Altherr M."/>
            <person name="Couronne O."/>
            <person name="Aerts A."/>
            <person name="Bajorek E."/>
            <person name="Black S."/>
            <person name="Blumer H."/>
            <person name="Branscomb E."/>
            <person name="Brown N.C."/>
            <person name="Bruno W.J."/>
            <person name="Buckingham J.M."/>
            <person name="Callen D.F."/>
            <person name="Campbell C.S."/>
            <person name="Campbell M.L."/>
            <person name="Campbell E.W."/>
            <person name="Caoile C."/>
            <person name="Challacombe J.F."/>
            <person name="Chasteen L.A."/>
            <person name="Chertkov O."/>
            <person name="Chi H.C."/>
            <person name="Christensen M."/>
            <person name="Clark L.M."/>
            <person name="Cohn J.D."/>
            <person name="Denys M."/>
            <person name="Detter J.C."/>
            <person name="Dickson M."/>
            <person name="Dimitrijevic-Bussod M."/>
            <person name="Escobar J."/>
            <person name="Fawcett J.J."/>
            <person name="Flowers D."/>
            <person name="Fotopulos D."/>
            <person name="Glavina T."/>
            <person name="Gomez M."/>
            <person name="Gonzales E."/>
            <person name="Goodstein D."/>
            <person name="Goodwin L.A."/>
            <person name="Grady D.L."/>
            <person name="Grigoriev I."/>
            <person name="Groza M."/>
            <person name="Hammon N."/>
            <person name="Hawkins T."/>
            <person name="Haydu L."/>
            <person name="Hildebrand C.E."/>
            <person name="Huang W."/>
            <person name="Israni S."/>
            <person name="Jett J."/>
            <person name="Jewett P.B."/>
            <person name="Kadner K."/>
            <person name="Kimball H."/>
            <person name="Kobayashi A."/>
            <person name="Krawczyk M.-C."/>
            <person name="Leyba T."/>
            <person name="Longmire J.L."/>
            <person name="Lopez F."/>
            <person name="Lou Y."/>
            <person name="Lowry S."/>
            <person name="Ludeman T."/>
            <person name="Manohar C.F."/>
            <person name="Mark G.A."/>
            <person name="McMurray K.L."/>
            <person name="Meincke L.J."/>
            <person name="Morgan J."/>
            <person name="Moyzis R.K."/>
            <person name="Mundt M.O."/>
            <person name="Munk A.C."/>
            <person name="Nandkeshwar R.D."/>
            <person name="Pitluck S."/>
            <person name="Pollard M."/>
            <person name="Predki P."/>
            <person name="Parson-Quintana B."/>
            <person name="Ramirez L."/>
            <person name="Rash S."/>
            <person name="Retterer J."/>
            <person name="Ricke D.O."/>
            <person name="Robinson D.L."/>
            <person name="Rodriguez A."/>
            <person name="Salamov A."/>
            <person name="Saunders E.H."/>
            <person name="Scott D."/>
            <person name="Shough T."/>
            <person name="Stallings R.L."/>
            <person name="Stalvey M."/>
            <person name="Sutherland R.D."/>
            <person name="Tapia R."/>
            <person name="Tesmer J.G."/>
            <person name="Thayer N."/>
            <person name="Thompson L.S."/>
            <person name="Tice H."/>
            <person name="Torney D.C."/>
            <person name="Tran-Gyamfi M."/>
            <person name="Tsai M."/>
            <person name="Ulanovsky L.E."/>
            <person name="Ustaszewska A."/>
            <person name="Vo N."/>
            <person name="White P.S."/>
            <person name="Williams A.L."/>
            <person name="Wills P.L."/>
            <person name="Wu J.-R."/>
            <person name="Wu K."/>
            <person name="Yang J."/>
            <person name="DeJong P."/>
            <person name="Bruce D."/>
            <person name="Doggett N.A."/>
            <person name="Deaven L."/>
            <person name="Schmutz J."/>
            <person name="Grimwood J."/>
            <person name="Richardson P."/>
            <person name="Rokhsar D.S."/>
            <person name="Eichler E.E."/>
            <person name="Gilna P."/>
            <person name="Lucas S.M."/>
            <person name="Myers R.M."/>
            <person name="Rubin E.M."/>
            <person name="Pennacchio L.A."/>
        </authorList>
    </citation>
    <scope>NUCLEOTIDE SEQUENCE [LARGE SCALE GENOMIC DNA]</scope>
</reference>
<gene>
    <name type="primary">PRSS29P</name>
    <name type="synonym">ISP2</name>
</gene>
<organism>
    <name type="scientific">Homo sapiens</name>
    <name type="common">Human</name>
    <dbReference type="NCBI Taxonomy" id="9606"/>
    <lineage>
        <taxon>Eukaryota</taxon>
        <taxon>Metazoa</taxon>
        <taxon>Chordata</taxon>
        <taxon>Craniata</taxon>
        <taxon>Vertebrata</taxon>
        <taxon>Euteleostomi</taxon>
        <taxon>Mammalia</taxon>
        <taxon>Eutheria</taxon>
        <taxon>Euarchontoglires</taxon>
        <taxon>Primates</taxon>
        <taxon>Haplorrhini</taxon>
        <taxon>Catarrhini</taxon>
        <taxon>Hominidae</taxon>
        <taxon>Homo</taxon>
    </lineage>
</organism>
<protein>
    <recommendedName>
        <fullName>Putative serine protease 29</fullName>
        <ecNumber>3.4.21.-</ecNumber>
    </recommendedName>
    <alternativeName>
        <fullName>Implantation serine proteinase 2-like protein</fullName>
        <shortName>ISP2-like protein</shortName>
    </alternativeName>
</protein>
<sequence length="313" mass="34063">MPTTPDPGSEPPARTPRPPPLTPGLSPQPALHALSPQLLLLLFLAVSSLGSCSTGSPVPVPENDLVGIVGGHNAPPGKWPWQVSLRVYSYHWASWAHICGGSLIHPQWVLTAAHCIFWKDTDPSIYRIHAGDVYLYGGRGLLNVSRIIVHPNYVTAGLGADVALLQLEPHDLSNVRTVKLSPVSLELTPKDQCWVTGWGAIIRKESLPPPYRLQQASVQVLENAVCEQPYRNASGHTGDRQLILDDMLCAGSEGRDSCYGDSGGPLVCRLRGSWRLVGVVSWGYGCTLRDFPGVYTHVQIYVPWILQQVGELP</sequence>
<keyword id="KW-1015">Disulfide bond</keyword>
<keyword id="KW-0325">Glycoprotein</keyword>
<keyword id="KW-0378">Hydrolase</keyword>
<keyword id="KW-0645">Protease</keyword>
<keyword id="KW-1185">Reference proteome</keyword>
<keyword id="KW-0964">Secreted</keyword>
<keyword id="KW-0720">Serine protease</keyword>
<keyword id="KW-0732">Signal</keyword>
<proteinExistence type="uncertain"/>
<dbReference type="EC" id="3.4.21.-"/>
<dbReference type="EMBL" id="AC120498">
    <property type="status" value="NOT_ANNOTATED_CDS"/>
    <property type="molecule type" value="Genomic_DNA"/>
</dbReference>
<dbReference type="SMR" id="A6NIE9"/>
<dbReference type="FunCoup" id="A6NIE9">
    <property type="interactions" value="75"/>
</dbReference>
<dbReference type="GlyCosmos" id="A6NIE9">
    <property type="glycosylation" value="1 site, No reported glycans"/>
</dbReference>
<dbReference type="GlyGen" id="A6NIE9">
    <property type="glycosylation" value="2 sites"/>
</dbReference>
<dbReference type="BioMuta" id="HGNC:17542"/>
<dbReference type="MassIVE" id="A6NIE9"/>
<dbReference type="PeptideAtlas" id="A6NIE9"/>
<dbReference type="ProteomicsDB" id="1266"/>
<dbReference type="TopDownProteomics" id="A6NIE9"/>
<dbReference type="AGR" id="HGNC:17542"/>
<dbReference type="GeneCards" id="PRSS29P"/>
<dbReference type="HGNC" id="HGNC:17542">
    <property type="gene designation" value="PRSS29P"/>
</dbReference>
<dbReference type="neXtProt" id="NX_A6NIE9"/>
<dbReference type="InParanoid" id="A6NIE9"/>
<dbReference type="PAN-GO" id="A6NIE9">
    <property type="GO annotations" value="3 GO annotations based on evolutionary models"/>
</dbReference>
<dbReference type="PhylomeDB" id="A6NIE9"/>
<dbReference type="Pharos" id="A6NIE9">
    <property type="development level" value="Tdark"/>
</dbReference>
<dbReference type="Proteomes" id="UP000005640">
    <property type="component" value="Unplaced"/>
</dbReference>
<dbReference type="RNAct" id="A6NIE9">
    <property type="molecule type" value="protein"/>
</dbReference>
<dbReference type="GO" id="GO:0005615">
    <property type="term" value="C:extracellular space"/>
    <property type="evidence" value="ECO:0000318"/>
    <property type="project" value="GO_Central"/>
</dbReference>
<dbReference type="GO" id="GO:0004252">
    <property type="term" value="F:serine-type endopeptidase activity"/>
    <property type="evidence" value="ECO:0000318"/>
    <property type="project" value="GO_Central"/>
</dbReference>
<dbReference type="GO" id="GO:0006508">
    <property type="term" value="P:proteolysis"/>
    <property type="evidence" value="ECO:0000318"/>
    <property type="project" value="GO_Central"/>
</dbReference>
<dbReference type="CDD" id="cd00190">
    <property type="entry name" value="Tryp_SPc"/>
    <property type="match status" value="1"/>
</dbReference>
<dbReference type="FunFam" id="2.40.10.10:FF:000003">
    <property type="entry name" value="Transmembrane serine protease 3"/>
    <property type="match status" value="1"/>
</dbReference>
<dbReference type="Gene3D" id="2.40.10.10">
    <property type="entry name" value="Trypsin-like serine proteases"/>
    <property type="match status" value="2"/>
</dbReference>
<dbReference type="InterPro" id="IPR009003">
    <property type="entry name" value="Peptidase_S1_PA"/>
</dbReference>
<dbReference type="InterPro" id="IPR043504">
    <property type="entry name" value="Peptidase_S1_PA_chymotrypsin"/>
</dbReference>
<dbReference type="InterPro" id="IPR001314">
    <property type="entry name" value="Peptidase_S1A"/>
</dbReference>
<dbReference type="InterPro" id="IPR001254">
    <property type="entry name" value="Trypsin_dom"/>
</dbReference>
<dbReference type="InterPro" id="IPR018114">
    <property type="entry name" value="TRYPSIN_HIS"/>
</dbReference>
<dbReference type="InterPro" id="IPR033116">
    <property type="entry name" value="TRYPSIN_SER"/>
</dbReference>
<dbReference type="PANTHER" id="PTHR24253:SF144">
    <property type="entry name" value="CHYMOTRYPSIN-LIKE PROTEASE CTRL-1-RELATED"/>
    <property type="match status" value="1"/>
</dbReference>
<dbReference type="PANTHER" id="PTHR24253">
    <property type="entry name" value="TRANSMEMBRANE PROTEASE SERINE"/>
    <property type="match status" value="1"/>
</dbReference>
<dbReference type="Pfam" id="PF00089">
    <property type="entry name" value="Trypsin"/>
    <property type="match status" value="1"/>
</dbReference>
<dbReference type="PRINTS" id="PR00722">
    <property type="entry name" value="CHYMOTRYPSIN"/>
</dbReference>
<dbReference type="SMART" id="SM00020">
    <property type="entry name" value="Tryp_SPc"/>
    <property type="match status" value="1"/>
</dbReference>
<dbReference type="SUPFAM" id="SSF50494">
    <property type="entry name" value="Trypsin-like serine proteases"/>
    <property type="match status" value="1"/>
</dbReference>
<dbReference type="PROSITE" id="PS50240">
    <property type="entry name" value="TRYPSIN_DOM"/>
    <property type="match status" value="1"/>
</dbReference>
<dbReference type="PROSITE" id="PS00134">
    <property type="entry name" value="TRYPSIN_HIS"/>
    <property type="match status" value="1"/>
</dbReference>
<dbReference type="PROSITE" id="PS00135">
    <property type="entry name" value="TRYPSIN_SER"/>
    <property type="match status" value="1"/>
</dbReference>
<evidence type="ECO:0000250" key="1"/>
<evidence type="ECO:0000255" key="2"/>
<evidence type="ECO:0000255" key="3">
    <source>
        <dbReference type="PROSITE-ProRule" id="PRU00274"/>
    </source>
</evidence>
<evidence type="ECO:0000256" key="4">
    <source>
        <dbReference type="SAM" id="MobiDB-lite"/>
    </source>
</evidence>
<evidence type="ECO:0000305" key="5"/>